<comment type="function">
    <text evidence="1">Catalyzes the reductive dealkylation of cyanocobalamin to cob(II)alamin, using FAD or FMN as cofactor and NADPH as cosubstrate. Can also catalyze the glutathione-dependent reductive demethylation of methylcobalamin, and, with much lower efficiency, the glutathione-dependent reductive demethylation of adenosylcobalamin. Under anaerobic conditions cob(I)alamin is the first product; it is highly reactive and is converted to aquocob(II)alamin in the presence of oxygen. Binds cyanocobalamin, adenosylcobalamin, methylcobalamin and other, related vitamin B12 derivatives.</text>
</comment>
<comment type="cofactor">
    <cofactor evidence="1">
        <name>FAD</name>
        <dbReference type="ChEBI" id="CHEBI:57692"/>
    </cofactor>
    <cofactor evidence="1">
        <name>FMN</name>
        <dbReference type="ChEBI" id="CHEBI:58210"/>
    </cofactor>
    <text evidence="1">Can utilize both FAD and FMN.</text>
</comment>
<comment type="subcellular location">
    <subcellularLocation>
        <location evidence="1">Cytoplasm</location>
    </subcellularLocation>
</comment>
<comment type="similarity">
    <text evidence="2">Belongs to the MMACHC family.</text>
</comment>
<feature type="chain" id="PRO_0000076263" description="MMACHC-like protein">
    <location>
        <begin position="1"/>
        <end position="272"/>
    </location>
</feature>
<feature type="binding site" evidence="1">
    <location>
        <position position="121"/>
    </location>
    <ligand>
        <name>substrate</name>
    </ligand>
</feature>
<feature type="binding site" evidence="1">
    <location>
        <begin position="132"/>
        <end position="135"/>
    </location>
    <ligand>
        <name>substrate</name>
    </ligand>
</feature>
<feature type="binding site" evidence="1">
    <location>
        <begin position="146"/>
        <end position="148"/>
    </location>
    <ligand>
        <name>substrate</name>
    </ligand>
</feature>
<feature type="helix" evidence="3">
    <location>
        <begin position="5"/>
        <end position="18"/>
    </location>
</feature>
<feature type="turn" evidence="3">
    <location>
        <begin position="21"/>
        <end position="24"/>
    </location>
</feature>
<feature type="strand" evidence="3">
    <location>
        <begin position="25"/>
        <end position="31"/>
    </location>
</feature>
<feature type="helix" evidence="3">
    <location>
        <begin position="32"/>
        <end position="39"/>
    </location>
</feature>
<feature type="strand" evidence="3">
    <location>
        <begin position="53"/>
        <end position="60"/>
    </location>
</feature>
<feature type="helix" evidence="3">
    <location>
        <begin position="63"/>
        <end position="66"/>
    </location>
</feature>
<feature type="helix" evidence="3">
    <location>
        <begin position="68"/>
        <end position="80"/>
    </location>
</feature>
<feature type="helix" evidence="3">
    <location>
        <begin position="83"/>
        <end position="89"/>
    </location>
</feature>
<feature type="helix" evidence="3">
    <location>
        <begin position="93"/>
        <end position="109"/>
    </location>
</feature>
<feature type="turn" evidence="3">
    <location>
        <begin position="110"/>
        <end position="112"/>
    </location>
</feature>
<feature type="strand" evidence="3">
    <location>
        <begin position="117"/>
        <end position="120"/>
    </location>
</feature>
<feature type="strand" evidence="3">
    <location>
        <begin position="130"/>
        <end position="132"/>
    </location>
</feature>
<feature type="helix" evidence="3">
    <location>
        <begin position="134"/>
        <end position="140"/>
    </location>
</feature>
<feature type="strand" evidence="3">
    <location>
        <begin position="143"/>
        <end position="147"/>
    </location>
</feature>
<feature type="helix" evidence="3">
    <location>
        <begin position="149"/>
        <end position="151"/>
    </location>
</feature>
<feature type="strand" evidence="3">
    <location>
        <begin position="174"/>
        <end position="177"/>
    </location>
</feature>
<feature type="turn" evidence="3">
    <location>
        <begin position="178"/>
        <end position="180"/>
    </location>
</feature>
<feature type="strand" evidence="3">
    <location>
        <begin position="185"/>
        <end position="196"/>
    </location>
</feature>
<feature type="helix" evidence="3">
    <location>
        <begin position="212"/>
        <end position="225"/>
    </location>
</feature>
<feature type="helix" evidence="3">
    <location>
        <begin position="226"/>
        <end position="228"/>
    </location>
</feature>
<feature type="helix" evidence="3">
    <location>
        <begin position="230"/>
        <end position="233"/>
    </location>
</feature>
<feature type="helix" evidence="3">
    <location>
        <begin position="243"/>
        <end position="250"/>
    </location>
</feature>
<feature type="helix" evidence="3">
    <location>
        <begin position="253"/>
        <end position="255"/>
    </location>
</feature>
<feature type="helix" evidence="3">
    <location>
        <begin position="257"/>
        <end position="264"/>
    </location>
</feature>
<protein>
    <recommendedName>
        <fullName>MMACHC-like protein</fullName>
        <ecNumber evidence="1">1.16.1.-</ecNumber>
    </recommendedName>
    <alternativeName>
        <fullName>Cobalamin deficiency protein 1</fullName>
    </alternativeName>
    <alternativeName>
        <fullName>Cyanocobalamin reductase (cyanide-eliminating)</fullName>
    </alternativeName>
</protein>
<organism>
    <name type="scientific">Caenorhabditis elegans</name>
    <dbReference type="NCBI Taxonomy" id="6239"/>
    <lineage>
        <taxon>Eukaryota</taxon>
        <taxon>Metazoa</taxon>
        <taxon>Ecdysozoa</taxon>
        <taxon>Nematoda</taxon>
        <taxon>Chromadorea</taxon>
        <taxon>Rhabditida</taxon>
        <taxon>Rhabditina</taxon>
        <taxon>Rhabditomorpha</taxon>
        <taxon>Rhabditoidea</taxon>
        <taxon>Rhabditidae</taxon>
        <taxon>Peloderinae</taxon>
        <taxon>Caenorhabditis</taxon>
    </lineage>
</organism>
<proteinExistence type="evidence at protein level"/>
<keyword id="KW-0002">3D-structure</keyword>
<keyword id="KW-0963">Cytoplasm</keyword>
<keyword id="KW-0274">FAD</keyword>
<keyword id="KW-0285">Flavoprotein</keyword>
<keyword id="KW-0288">FMN</keyword>
<keyword id="KW-0521">NADP</keyword>
<keyword id="KW-0560">Oxidoreductase</keyword>
<keyword id="KW-1185">Reference proteome</keyword>
<dbReference type="EC" id="1.16.1.-" evidence="1"/>
<dbReference type="EMBL" id="FO081669">
    <property type="protein sequence ID" value="CCD73227.1"/>
    <property type="molecule type" value="Genomic_DNA"/>
</dbReference>
<dbReference type="RefSeq" id="NP_001022524.1">
    <property type="nucleotide sequence ID" value="NM_001027353.8"/>
</dbReference>
<dbReference type="PDB" id="5UJC">
    <property type="method" value="X-ray"/>
    <property type="resolution" value="1.35 A"/>
    <property type="chains" value="A=1-264"/>
</dbReference>
<dbReference type="PDBsum" id="5UJC"/>
<dbReference type="SMR" id="Q7Z144"/>
<dbReference type="FunCoup" id="Q7Z144">
    <property type="interactions" value="586"/>
</dbReference>
<dbReference type="STRING" id="6239.ZK546.17.1"/>
<dbReference type="PaxDb" id="6239-ZK546.17"/>
<dbReference type="PeptideAtlas" id="Q7Z144"/>
<dbReference type="EnsemblMetazoa" id="ZK546.17.1">
    <property type="protein sequence ID" value="ZK546.17.1"/>
    <property type="gene ID" value="WBGene00022766"/>
</dbReference>
<dbReference type="GeneID" id="3565644"/>
<dbReference type="KEGG" id="cel:CELE_ZK546.17"/>
<dbReference type="AGR" id="WB:WBGene00022766"/>
<dbReference type="CTD" id="3565644"/>
<dbReference type="WormBase" id="ZK546.17">
    <property type="protein sequence ID" value="CE34461"/>
    <property type="gene ID" value="WBGene00022766"/>
    <property type="gene designation" value="cblc-1"/>
</dbReference>
<dbReference type="eggNOG" id="KOG4552">
    <property type="taxonomic scope" value="Eukaryota"/>
</dbReference>
<dbReference type="GeneTree" id="ENSGT00390000003464"/>
<dbReference type="HOGENOM" id="CLU_095722_0_0_1"/>
<dbReference type="InParanoid" id="Q7Z144"/>
<dbReference type="OMA" id="FQVGWYN"/>
<dbReference type="OrthoDB" id="409189at2759"/>
<dbReference type="PhylomeDB" id="Q7Z144"/>
<dbReference type="Reactome" id="R-CEL-9759218">
    <property type="pathway name" value="Cobalamin (Cbl) metabolism"/>
</dbReference>
<dbReference type="PRO" id="PR:Q7Z144"/>
<dbReference type="Proteomes" id="UP000001940">
    <property type="component" value="Chromosome II"/>
</dbReference>
<dbReference type="Bgee" id="WBGene00022766">
    <property type="expression patterns" value="Expressed in germ line (C elegans) and 4 other cell types or tissues"/>
</dbReference>
<dbReference type="GO" id="GO:0005737">
    <property type="term" value="C:cytoplasm"/>
    <property type="evidence" value="ECO:0000318"/>
    <property type="project" value="GO_Central"/>
</dbReference>
<dbReference type="GO" id="GO:0031419">
    <property type="term" value="F:cobalamin binding"/>
    <property type="evidence" value="ECO:0000314"/>
    <property type="project" value="WormBase"/>
</dbReference>
<dbReference type="GO" id="GO:0033787">
    <property type="term" value="F:cyanocobalamin reductase (cyanide-eliminating) (NADP+) activity"/>
    <property type="evidence" value="ECO:0000250"/>
    <property type="project" value="UniProtKB"/>
</dbReference>
<dbReference type="GO" id="GO:0032451">
    <property type="term" value="F:demethylase activity"/>
    <property type="evidence" value="ECO:0000250"/>
    <property type="project" value="UniProtKB"/>
</dbReference>
<dbReference type="GO" id="GO:0071949">
    <property type="term" value="F:FAD binding"/>
    <property type="evidence" value="ECO:0000250"/>
    <property type="project" value="UniProtKB"/>
</dbReference>
<dbReference type="GO" id="GO:0043295">
    <property type="term" value="F:glutathione binding"/>
    <property type="evidence" value="ECO:0000250"/>
    <property type="project" value="UniProtKB"/>
</dbReference>
<dbReference type="GO" id="GO:0016491">
    <property type="term" value="F:oxidoreductase activity"/>
    <property type="evidence" value="ECO:0000250"/>
    <property type="project" value="UniProtKB"/>
</dbReference>
<dbReference type="GO" id="GO:0009235">
    <property type="term" value="P:cobalamin metabolic process"/>
    <property type="evidence" value="ECO:0000250"/>
    <property type="project" value="UniProtKB"/>
</dbReference>
<dbReference type="GO" id="GO:0070988">
    <property type="term" value="P:demethylation"/>
    <property type="evidence" value="ECO:0000250"/>
    <property type="project" value="UniProtKB"/>
</dbReference>
<dbReference type="GO" id="GO:0006749">
    <property type="term" value="P:glutathione metabolic process"/>
    <property type="evidence" value="ECO:0000250"/>
    <property type="project" value="UniProtKB"/>
</dbReference>
<dbReference type="CDD" id="cd12959">
    <property type="entry name" value="MMACHC-like"/>
    <property type="match status" value="1"/>
</dbReference>
<dbReference type="InterPro" id="IPR032037">
    <property type="entry name" value="MMACHC"/>
</dbReference>
<dbReference type="PANTHER" id="PTHR31457:SF2">
    <property type="entry name" value="CYANOCOBALAMIN REDUCTASE _ ALKYLCOBALAMIN DEALKYLASE"/>
    <property type="match status" value="1"/>
</dbReference>
<dbReference type="PANTHER" id="PTHR31457">
    <property type="entry name" value="METHYLMALONIC ACIDURIA AND HOMOCYSTINURIA TYPE C PROTEIN"/>
    <property type="match status" value="1"/>
</dbReference>
<dbReference type="Pfam" id="PF16690">
    <property type="entry name" value="MMACHC"/>
    <property type="match status" value="1"/>
</dbReference>
<name>MMAC_CAEEL</name>
<sequence>MVTEMSHAESIKRVVDQKLSSHEGFESHMFKIGSYNEAVGESSPFALPYDDSTMALLILSTPDMFDVAFRKWVVQKTMDFGSFDEVCEMVSSPIQSFLEDRLEIMSEKLRKVEENFEILHDYSMTPQRRPKILMQTCGHVAGAAFYYQPCHFQEDGVTWPPAGRMGPNLKFIGLSLHPIYGGHFAFRSVLIFPNVKIPEFCEKEPRPILTASEDVRTALEKFNYNWKDSGFRDFGNPTRRYSTTQMEFFGRPVAERWEVLRPWVDGGAKNID</sequence>
<accession>Q7Z144</accession>
<reference key="1">
    <citation type="journal article" date="1998" name="Science">
        <title>Genome sequence of the nematode C. elegans: a platform for investigating biology.</title>
        <authorList>
            <consortium name="The C. elegans sequencing consortium"/>
        </authorList>
    </citation>
    <scope>NUCLEOTIDE SEQUENCE [LARGE SCALE GENOMIC DNA]</scope>
    <source>
        <strain>Bristol N2</strain>
    </source>
</reference>
<reference key="2">
    <citation type="journal article" date="2006" name="Mol. Genet. Metab.">
        <title>Propionyl-CoA and adenosylcobalamin metabolism in Caenorhabditis elegans: evidence for a role of methylmalonyl-CoA epimerase in intermediary metabolism.</title>
        <authorList>
            <person name="Chandler R.J."/>
            <person name="Aswani V."/>
            <person name="Tsai M.S."/>
            <person name="Falk M."/>
            <person name="Wehrli N."/>
            <person name="Stabler S."/>
            <person name="Allen R."/>
            <person name="Sedensky M."/>
            <person name="Kazazian H.H."/>
            <person name="Venditti C.P."/>
        </authorList>
    </citation>
    <scope>IDENTIFICATION</scope>
</reference>
<evidence type="ECO:0000250" key="1">
    <source>
        <dbReference type="UniProtKB" id="Q9Y4U1"/>
    </source>
</evidence>
<evidence type="ECO:0000305" key="2"/>
<evidence type="ECO:0007829" key="3">
    <source>
        <dbReference type="PDB" id="5UJC"/>
    </source>
</evidence>
<gene>
    <name type="primary">cblc-1</name>
    <name type="ORF">ZK546.17</name>
</gene>